<dbReference type="EMBL" id="U18813">
    <property type="protein sequence ID" value="AAB64590.1"/>
    <property type="molecule type" value="Genomic_DNA"/>
</dbReference>
<dbReference type="EMBL" id="BK006939">
    <property type="protein sequence ID" value="DAA07711.1"/>
    <property type="molecule type" value="Genomic_DNA"/>
</dbReference>
<dbReference type="PIR" id="S50557">
    <property type="entry name" value="S50557"/>
</dbReference>
<dbReference type="RefSeq" id="NP_010974.1">
    <property type="nucleotide sequence ID" value="NM_001178945.1"/>
</dbReference>
<dbReference type="SMR" id="P40036"/>
<dbReference type="BioGRID" id="36794">
    <property type="interactions" value="75"/>
</dbReference>
<dbReference type="DIP" id="DIP-2376N"/>
<dbReference type="FunCoup" id="P40036">
    <property type="interactions" value="183"/>
</dbReference>
<dbReference type="IntAct" id="P40036">
    <property type="interactions" value="17"/>
</dbReference>
<dbReference type="MINT" id="P40036"/>
<dbReference type="STRING" id="4932.YER054C"/>
<dbReference type="CAZy" id="CBM21">
    <property type="family name" value="Carbohydrate-Binding Module Family 21"/>
</dbReference>
<dbReference type="iPTMnet" id="P40036"/>
<dbReference type="PaxDb" id="4932-YER054C"/>
<dbReference type="PeptideAtlas" id="P40036"/>
<dbReference type="EnsemblFungi" id="YER054C_mRNA">
    <property type="protein sequence ID" value="YER054C"/>
    <property type="gene ID" value="YER054C"/>
</dbReference>
<dbReference type="GeneID" id="856781"/>
<dbReference type="KEGG" id="sce:YER054C"/>
<dbReference type="AGR" id="SGD:S000000856"/>
<dbReference type="SGD" id="S000000856">
    <property type="gene designation" value="GIP2"/>
</dbReference>
<dbReference type="VEuPathDB" id="FungiDB:YER054C"/>
<dbReference type="eggNOG" id="KOG3986">
    <property type="taxonomic scope" value="Eukaryota"/>
</dbReference>
<dbReference type="GeneTree" id="ENSGT00940000174300"/>
<dbReference type="HOGENOM" id="CLU_017894_0_0_1"/>
<dbReference type="InParanoid" id="P40036"/>
<dbReference type="OMA" id="KSKRFQN"/>
<dbReference type="OrthoDB" id="1881at2759"/>
<dbReference type="BioCyc" id="YEAST:G3O-30232-MONOMER"/>
<dbReference type="Reactome" id="R-SCE-3322077">
    <property type="pathway name" value="Glycogen synthesis"/>
</dbReference>
<dbReference type="BioGRID-ORCS" id="856781">
    <property type="hits" value="5 hits in 10 CRISPR screens"/>
</dbReference>
<dbReference type="PRO" id="PR:P40036"/>
<dbReference type="Proteomes" id="UP000002311">
    <property type="component" value="Chromosome V"/>
</dbReference>
<dbReference type="RNAct" id="P40036">
    <property type="molecule type" value="protein"/>
</dbReference>
<dbReference type="GO" id="GO:0000164">
    <property type="term" value="C:protein phosphatase type 1 complex"/>
    <property type="evidence" value="ECO:0000353"/>
    <property type="project" value="SGD"/>
</dbReference>
<dbReference type="GO" id="GO:2001069">
    <property type="term" value="F:glycogen binding"/>
    <property type="evidence" value="ECO:0000318"/>
    <property type="project" value="GO_Central"/>
</dbReference>
<dbReference type="GO" id="GO:0008157">
    <property type="term" value="F:protein phosphatase 1 binding"/>
    <property type="evidence" value="ECO:0000318"/>
    <property type="project" value="GO_Central"/>
</dbReference>
<dbReference type="GO" id="GO:0019888">
    <property type="term" value="F:protein phosphatase regulator activity"/>
    <property type="evidence" value="ECO:0000314"/>
    <property type="project" value="SGD"/>
</dbReference>
<dbReference type="GO" id="GO:0005977">
    <property type="term" value="P:glycogen metabolic process"/>
    <property type="evidence" value="ECO:0000315"/>
    <property type="project" value="SGD"/>
</dbReference>
<dbReference type="GO" id="GO:0005979">
    <property type="term" value="P:regulation of glycogen biosynthetic process"/>
    <property type="evidence" value="ECO:0000318"/>
    <property type="project" value="GO_Central"/>
</dbReference>
<dbReference type="Gene3D" id="2.60.40.2440">
    <property type="entry name" value="Carbohydrate binding type-21 domain"/>
    <property type="match status" value="1"/>
</dbReference>
<dbReference type="InterPro" id="IPR005036">
    <property type="entry name" value="CBM21_dom"/>
</dbReference>
<dbReference type="InterPro" id="IPR038175">
    <property type="entry name" value="CBM21_dom_sf"/>
</dbReference>
<dbReference type="InterPro" id="IPR016717">
    <property type="entry name" value="Gip2/Pig2"/>
</dbReference>
<dbReference type="InterPro" id="IPR050782">
    <property type="entry name" value="PP1_regulatory_subunit_3"/>
</dbReference>
<dbReference type="PANTHER" id="PTHR12307:SF36">
    <property type="entry name" value="GLYCOGEN-BINDING SUBUNIT 76A"/>
    <property type="match status" value="1"/>
</dbReference>
<dbReference type="PANTHER" id="PTHR12307">
    <property type="entry name" value="PROTEIN PHOSPHATASE 1 REGULATORY SUBUNIT"/>
    <property type="match status" value="1"/>
</dbReference>
<dbReference type="Pfam" id="PF03370">
    <property type="entry name" value="CBM_21"/>
    <property type="match status" value="1"/>
</dbReference>
<dbReference type="PIRSF" id="PIRSF018234">
    <property type="entry name" value="PPase_interacting"/>
    <property type="match status" value="1"/>
</dbReference>
<dbReference type="PROSITE" id="PS51159">
    <property type="entry name" value="CBM21"/>
    <property type="match status" value="1"/>
</dbReference>
<proteinExistence type="evidence at protein level"/>
<feature type="chain" id="PRO_0000071521" description="GLC7-interacting protein 2">
    <location>
        <begin position="1"/>
        <end position="548"/>
    </location>
</feature>
<feature type="domain" description="CBM21" evidence="1">
    <location>
        <begin position="419"/>
        <end position="534"/>
    </location>
</feature>
<feature type="region of interest" description="Disordered" evidence="2">
    <location>
        <begin position="1"/>
        <end position="54"/>
    </location>
</feature>
<feature type="region of interest" description="Disordered" evidence="2">
    <location>
        <begin position="118"/>
        <end position="143"/>
    </location>
</feature>
<feature type="region of interest" description="Disordered" evidence="2">
    <location>
        <begin position="191"/>
        <end position="212"/>
    </location>
</feature>
<feature type="region of interest" description="Disordered" evidence="2">
    <location>
        <begin position="293"/>
        <end position="346"/>
    </location>
</feature>
<feature type="compositionally biased region" description="Basic and acidic residues" evidence="2">
    <location>
        <begin position="1"/>
        <end position="23"/>
    </location>
</feature>
<feature type="modified residue" description="Phosphoserine" evidence="7">
    <location>
        <position position="51"/>
    </location>
</feature>
<feature type="modified residue" description="Phosphothreonine" evidence="7">
    <location>
        <position position="52"/>
    </location>
</feature>
<feature type="modified residue" description="Phosphoserine" evidence="7">
    <location>
        <position position="155"/>
    </location>
</feature>
<feature type="modified residue" description="Phosphoserine" evidence="5 7">
    <location>
        <position position="221"/>
    </location>
</feature>
<feature type="modified residue" description="Phosphoserine" evidence="6">
    <location>
        <position position="238"/>
    </location>
</feature>
<protein>
    <recommendedName>
        <fullName>GLC7-interacting protein 2</fullName>
    </recommendedName>
</protein>
<name>GIP2_YEAST</name>
<sequence>MYIKAEQKPQQFERKNEKLDRNKNQQLPDLETDFKGYRVNSDLYNKERDGSTEETLNSLKFLHKPQRVTQMRANRFPEEEVQRNTDLNKRIFSAGNDENVDNESGWSKIAAAKNHTSVESLNGSTRPPFKIELPPLSPKSTVPKSFQAEYPEAKSPGNDMNFEYDEEILIPFAPPVYKKSGELLKSSLKRRSKSLPTTPGIRSGNGVQARDGSPMLIRSKSVHFDQAAPVKYFAEDESPINVNKTEQHDNCLSFKHKPVNLMVDPEEETKMLSSGLETTSIDDDLTTVAPKGFAHPAKISNPNNGKGTNNTKLRKSKRFQNLLKNRTDMPPSKSNKKFVNGGGAHEISDRNSKNYHVVGLYSKNFPILSNKNPKSLKLNIFINLSQNKKVFLQELSLYIHRDNNYFSNSSSFYNIPNSHNGNDCNGVAKGYNAGCTRLIAGRILVKNIFYDKRVVVRYTWDSWRTTHEVECVYISDGDGILPGTNMDIFHFIIDDVSKVDPRGKLEFCIHYSTRNDYEREEYWDNNNGNNYKVDVVMDGFNDPFAAAA</sequence>
<organism>
    <name type="scientific">Saccharomyces cerevisiae (strain ATCC 204508 / S288c)</name>
    <name type="common">Baker's yeast</name>
    <dbReference type="NCBI Taxonomy" id="559292"/>
    <lineage>
        <taxon>Eukaryota</taxon>
        <taxon>Fungi</taxon>
        <taxon>Dikarya</taxon>
        <taxon>Ascomycota</taxon>
        <taxon>Saccharomycotina</taxon>
        <taxon>Saccharomycetes</taxon>
        <taxon>Saccharomycetales</taxon>
        <taxon>Saccharomycetaceae</taxon>
        <taxon>Saccharomyces</taxon>
    </lineage>
</organism>
<reference key="1">
    <citation type="journal article" date="1997" name="Nature">
        <title>The nucleotide sequence of Saccharomyces cerevisiae chromosome V.</title>
        <authorList>
            <person name="Dietrich F.S."/>
            <person name="Mulligan J.T."/>
            <person name="Hennessy K.M."/>
            <person name="Yelton M.A."/>
            <person name="Allen E."/>
            <person name="Araujo R."/>
            <person name="Aviles E."/>
            <person name="Berno A."/>
            <person name="Brennan T."/>
            <person name="Carpenter J."/>
            <person name="Chen E."/>
            <person name="Cherry J.M."/>
            <person name="Chung E."/>
            <person name="Duncan M."/>
            <person name="Guzman E."/>
            <person name="Hartzell G."/>
            <person name="Hunicke-Smith S."/>
            <person name="Hyman R.W."/>
            <person name="Kayser A."/>
            <person name="Komp C."/>
            <person name="Lashkari D."/>
            <person name="Lew H."/>
            <person name="Lin D."/>
            <person name="Mosedale D."/>
            <person name="Nakahara K."/>
            <person name="Namath A."/>
            <person name="Norgren R."/>
            <person name="Oefner P."/>
            <person name="Oh C."/>
            <person name="Petel F.X."/>
            <person name="Roberts D."/>
            <person name="Sehl P."/>
            <person name="Schramm S."/>
            <person name="Shogren T."/>
            <person name="Smith V."/>
            <person name="Taylor P."/>
            <person name="Wei Y."/>
            <person name="Botstein D."/>
            <person name="Davis R.W."/>
        </authorList>
    </citation>
    <scope>NUCLEOTIDE SEQUENCE [LARGE SCALE GENOMIC DNA]</scope>
    <source>
        <strain>ATCC 204508 / S288c</strain>
    </source>
</reference>
<reference key="2">
    <citation type="journal article" date="2014" name="G3 (Bethesda)">
        <title>The reference genome sequence of Saccharomyces cerevisiae: Then and now.</title>
        <authorList>
            <person name="Engel S.R."/>
            <person name="Dietrich F.S."/>
            <person name="Fisk D.G."/>
            <person name="Binkley G."/>
            <person name="Balakrishnan R."/>
            <person name="Costanzo M.C."/>
            <person name="Dwight S.S."/>
            <person name="Hitz B.C."/>
            <person name="Karra K."/>
            <person name="Nash R.S."/>
            <person name="Weng S."/>
            <person name="Wong E.D."/>
            <person name="Lloyd P."/>
            <person name="Skrzypek M.S."/>
            <person name="Miyasato S.R."/>
            <person name="Simison M."/>
            <person name="Cherry J.M."/>
        </authorList>
    </citation>
    <scope>GENOME REANNOTATION</scope>
    <source>
        <strain>ATCC 204508 / S288c</strain>
    </source>
</reference>
<reference key="3">
    <citation type="unpublished observations" date="1996-03">
        <authorList>
            <person name="Tu J."/>
            <person name="Song W."/>
            <person name="Carslon R."/>
        </authorList>
    </citation>
    <scope>INTERACTION WITH GLC7</scope>
</reference>
<reference key="4">
    <citation type="journal article" date="2003" name="Nature">
        <title>Global analysis of protein expression in yeast.</title>
        <authorList>
            <person name="Ghaemmaghami S."/>
            <person name="Huh W.-K."/>
            <person name="Bower K."/>
            <person name="Howson R.W."/>
            <person name="Belle A."/>
            <person name="Dephoure N."/>
            <person name="O'Shea E.K."/>
            <person name="Weissman J.S."/>
        </authorList>
    </citation>
    <scope>LEVEL OF PROTEIN EXPRESSION [LARGE SCALE ANALYSIS]</scope>
</reference>
<reference key="5">
    <citation type="journal article" date="2007" name="Proc. Natl. Acad. Sci. U.S.A.">
        <title>Analysis of phosphorylation sites on proteins from Saccharomyces cerevisiae by electron transfer dissociation (ETD) mass spectrometry.</title>
        <authorList>
            <person name="Chi A."/>
            <person name="Huttenhower C."/>
            <person name="Geer L.Y."/>
            <person name="Coon J.J."/>
            <person name="Syka J.E.P."/>
            <person name="Bai D.L."/>
            <person name="Shabanowitz J."/>
            <person name="Burke D.J."/>
            <person name="Troyanskaya O.G."/>
            <person name="Hunt D.F."/>
        </authorList>
    </citation>
    <scope>PHOSPHORYLATION [LARGE SCALE ANALYSIS] AT SER-221</scope>
    <scope>IDENTIFICATION BY MASS SPECTROMETRY [LARGE SCALE ANALYSIS]</scope>
</reference>
<reference key="6">
    <citation type="journal article" date="2008" name="Mol. Cell. Proteomics">
        <title>A multidimensional chromatography technology for in-depth phosphoproteome analysis.</title>
        <authorList>
            <person name="Albuquerque C.P."/>
            <person name="Smolka M.B."/>
            <person name="Payne S.H."/>
            <person name="Bafna V."/>
            <person name="Eng J."/>
            <person name="Zhou H."/>
        </authorList>
    </citation>
    <scope>PHOSPHORYLATION [LARGE SCALE ANALYSIS] AT SER-238</scope>
    <scope>IDENTIFICATION BY MASS SPECTROMETRY [LARGE SCALE ANALYSIS]</scope>
</reference>
<reference key="7">
    <citation type="journal article" date="2009" name="Science">
        <title>Global analysis of Cdk1 substrate phosphorylation sites provides insights into evolution.</title>
        <authorList>
            <person name="Holt L.J."/>
            <person name="Tuch B.B."/>
            <person name="Villen J."/>
            <person name="Johnson A.D."/>
            <person name="Gygi S.P."/>
            <person name="Morgan D.O."/>
        </authorList>
    </citation>
    <scope>PHOSPHORYLATION [LARGE SCALE ANALYSIS] AT SER-51; THR-52; SER-155 AND SER-221</scope>
    <scope>IDENTIFICATION BY MASS SPECTROMETRY [LARGE SCALE ANALYSIS]</scope>
</reference>
<reference key="8">
    <citation type="journal article" date="2012" name="Proc. Natl. Acad. Sci. U.S.A.">
        <title>N-terminal acetylome analyses and functional insights of the N-terminal acetyltransferase NatB.</title>
        <authorList>
            <person name="Van Damme P."/>
            <person name="Lasa M."/>
            <person name="Polevoda B."/>
            <person name="Gazquez C."/>
            <person name="Elosegui-Artola A."/>
            <person name="Kim D.S."/>
            <person name="De Juan-Pardo E."/>
            <person name="Demeyer K."/>
            <person name="Hole K."/>
            <person name="Larrea E."/>
            <person name="Timmerman E."/>
            <person name="Prieto J."/>
            <person name="Arnesen T."/>
            <person name="Sherman F."/>
            <person name="Gevaert K."/>
            <person name="Aldabe R."/>
        </authorList>
    </citation>
    <scope>IDENTIFICATION BY MASS SPECTROMETRY [LARGE SCALE ANALYSIS]</scope>
</reference>
<comment type="subunit">
    <text evidence="4">Interacts with phosphatase 1 (GLC7).</text>
</comment>
<comment type="interaction">
    <interactant intactId="EBI-7612">
        <id>P40036</id>
    </interactant>
    <interactant intactId="EBI-18140">
        <id>P40073</id>
        <label>SHO1</label>
    </interactant>
    <organismsDiffer>false</organismsDiffer>
    <experiments>2</experiments>
</comment>
<comment type="miscellaneous">
    <text evidence="3">Present with 125 molecules/cell in log phase SD medium.</text>
</comment>
<accession>P40036</accession>
<accession>D3DLV7</accession>
<keyword id="KW-0597">Phosphoprotein</keyword>
<keyword id="KW-1185">Reference proteome</keyword>
<gene>
    <name type="primary">GIP2</name>
    <name type="ordered locus">YER054C</name>
</gene>
<evidence type="ECO:0000255" key="1">
    <source>
        <dbReference type="PROSITE-ProRule" id="PRU00491"/>
    </source>
</evidence>
<evidence type="ECO:0000256" key="2">
    <source>
        <dbReference type="SAM" id="MobiDB-lite"/>
    </source>
</evidence>
<evidence type="ECO:0000269" key="3">
    <source>
    </source>
</evidence>
<evidence type="ECO:0000269" key="4">
    <source ref="3"/>
</evidence>
<evidence type="ECO:0007744" key="5">
    <source>
    </source>
</evidence>
<evidence type="ECO:0007744" key="6">
    <source>
    </source>
</evidence>
<evidence type="ECO:0007744" key="7">
    <source>
    </source>
</evidence>